<evidence type="ECO:0000255" key="1">
    <source>
        <dbReference type="HAMAP-Rule" id="MF_00984"/>
    </source>
</evidence>
<evidence type="ECO:0000256" key="2">
    <source>
        <dbReference type="SAM" id="MobiDB-lite"/>
    </source>
</evidence>
<evidence type="ECO:0000269" key="3">
    <source>
    </source>
</evidence>
<evidence type="ECO:0000269" key="4">
    <source>
    </source>
</evidence>
<evidence type="ECO:0000269" key="5">
    <source>
    </source>
</evidence>
<evidence type="ECO:0000269" key="6">
    <source>
    </source>
</evidence>
<evidence type="ECO:0000269" key="7">
    <source>
    </source>
</evidence>
<evidence type="ECO:0000269" key="8">
    <source>
    </source>
</evidence>
<evidence type="ECO:0000269" key="9">
    <source>
    </source>
</evidence>
<evidence type="ECO:0000269" key="10">
    <source>
    </source>
</evidence>
<evidence type="ECO:0000269" key="11">
    <source>
    </source>
</evidence>
<evidence type="ECO:0000269" key="12">
    <source>
    </source>
</evidence>
<evidence type="ECO:0000269" key="13">
    <source>
    </source>
</evidence>
<evidence type="ECO:0000269" key="14">
    <source>
    </source>
</evidence>
<evidence type="ECO:0000269" key="15">
    <source>
    </source>
</evidence>
<evidence type="ECO:0000269" key="16">
    <source>
    </source>
</evidence>
<evidence type="ECO:0000269" key="17">
    <source>
    </source>
</evidence>
<evidence type="ECO:0000269" key="18">
    <source>
    </source>
</evidence>
<evidence type="ECO:0000269" key="19">
    <source>
    </source>
</evidence>
<evidence type="ECO:0000269" key="20">
    <source>
    </source>
</evidence>
<evidence type="ECO:0000269" key="21">
    <source>
    </source>
</evidence>
<evidence type="ECO:0000269" key="22">
    <source>
    </source>
</evidence>
<evidence type="ECO:0000269" key="23">
    <source>
    </source>
</evidence>
<evidence type="ECO:0000305" key="24"/>
<evidence type="ECO:0007829" key="25">
    <source>
        <dbReference type="PDB" id="1EQQ"/>
    </source>
</evidence>
<evidence type="ECO:0007829" key="26">
    <source>
        <dbReference type="PDB" id="1QVC"/>
    </source>
</evidence>
<protein>
    <recommendedName>
        <fullName evidence="1">Single-stranded DNA-binding protein</fullName>
        <shortName evidence="1">SSB</shortName>
    </recommendedName>
    <alternativeName>
        <fullName>Helix-destabilizing protein</fullName>
    </alternativeName>
</protein>
<sequence length="178" mass="18975">MASRGVNKVILVGNLGQDPEVRYMPNGGAVANITLATSESWRDKATGEMKEQTEWHRVVLFGKLAEVASEYLRKGSQVYIEGQLRTRKWTDQSGQDRYTTEVVVNVGGTMQMLGGRQGGGAPAGGNIGGGQPQGGWGQPQQPQGGNQFSGGAQSRPQQSAPAAPSNEPPMDFDDDIPF</sequence>
<dbReference type="EMBL" id="J01704">
    <property type="protein sequence ID" value="AAA24649.1"/>
    <property type="molecule type" value="Genomic_DNA"/>
</dbReference>
<dbReference type="EMBL" id="U00006">
    <property type="protein sequence ID" value="AAC43153.1"/>
    <property type="molecule type" value="Genomic_DNA"/>
</dbReference>
<dbReference type="EMBL" id="U00096">
    <property type="protein sequence ID" value="AAC77029.1"/>
    <property type="molecule type" value="Genomic_DNA"/>
</dbReference>
<dbReference type="EMBL" id="AP009048">
    <property type="protein sequence ID" value="BAE78061.1"/>
    <property type="molecule type" value="Genomic_DNA"/>
</dbReference>
<dbReference type="PIR" id="B65214">
    <property type="entry name" value="DDEC"/>
</dbReference>
<dbReference type="RefSeq" id="NP_418483.1">
    <property type="nucleotide sequence ID" value="NC_000913.3"/>
</dbReference>
<dbReference type="PDB" id="1EQQ">
    <property type="method" value="X-ray"/>
    <property type="resolution" value="3.20 A"/>
    <property type="chains" value="A/B/C/D=1-178"/>
</dbReference>
<dbReference type="PDB" id="1EYG">
    <property type="method" value="X-ray"/>
    <property type="resolution" value="2.80 A"/>
    <property type="chains" value="A/B/C/D=1-116"/>
</dbReference>
<dbReference type="PDB" id="1KAW">
    <property type="method" value="X-ray"/>
    <property type="resolution" value="2.90 A"/>
    <property type="chains" value="A/B/C/D=2-136"/>
</dbReference>
<dbReference type="PDB" id="1QVC">
    <property type="method" value="X-ray"/>
    <property type="resolution" value="2.20 A"/>
    <property type="chains" value="A/B/C/D=2-146"/>
</dbReference>
<dbReference type="PDB" id="1SRU">
    <property type="method" value="X-ray"/>
    <property type="resolution" value="3.30 A"/>
    <property type="chains" value="A/B/C/D=1-113"/>
</dbReference>
<dbReference type="PDB" id="3C94">
    <property type="method" value="X-ray"/>
    <property type="resolution" value="2.70 A"/>
    <property type="chains" value="B/C=170-178"/>
</dbReference>
<dbReference type="PDB" id="3SXU">
    <property type="method" value="X-ray"/>
    <property type="resolution" value="1.85 A"/>
    <property type="chains" value="C=175-178"/>
</dbReference>
<dbReference type="PDB" id="3UF7">
    <property type="method" value="X-ray"/>
    <property type="resolution" value="1.20 A"/>
    <property type="chains" value="B/C=170-178"/>
</dbReference>
<dbReference type="PDB" id="4MZ9">
    <property type="method" value="X-ray"/>
    <property type="resolution" value="2.20 A"/>
    <property type="chains" value="A/B/C/D=1-178"/>
</dbReference>
<dbReference type="PDB" id="4Z0U">
    <property type="method" value="X-ray"/>
    <property type="resolution" value="2.00 A"/>
    <property type="chains" value="D/E=170-178"/>
</dbReference>
<dbReference type="PDB" id="8TG8">
    <property type="method" value="X-ray"/>
    <property type="resolution" value="1.58 A"/>
    <property type="chains" value="B=170-178"/>
</dbReference>
<dbReference type="PDBsum" id="1EQQ"/>
<dbReference type="PDBsum" id="1EYG"/>
<dbReference type="PDBsum" id="1KAW"/>
<dbReference type="PDBsum" id="1QVC"/>
<dbReference type="PDBsum" id="1SRU"/>
<dbReference type="PDBsum" id="3C94"/>
<dbReference type="PDBsum" id="3SXU"/>
<dbReference type="PDBsum" id="3UF7"/>
<dbReference type="PDBsum" id="4MZ9"/>
<dbReference type="PDBsum" id="4Z0U"/>
<dbReference type="PDBsum" id="8TG8"/>
<dbReference type="BMRB" id="P0AGE0"/>
<dbReference type="SMR" id="P0AGE0"/>
<dbReference type="BioGRID" id="4262671">
    <property type="interactions" value="111"/>
</dbReference>
<dbReference type="BioGRID" id="852864">
    <property type="interactions" value="1"/>
</dbReference>
<dbReference type="ComplexPortal" id="CPX-1928">
    <property type="entry name" value="SSB single-stranded DNA binding complex"/>
</dbReference>
<dbReference type="DIP" id="DIP-35980N"/>
<dbReference type="FunCoup" id="P0AGE0">
    <property type="interactions" value="608"/>
</dbReference>
<dbReference type="IntAct" id="P0AGE0">
    <property type="interactions" value="57"/>
</dbReference>
<dbReference type="MINT" id="P0AGE0"/>
<dbReference type="STRING" id="511145.b4059"/>
<dbReference type="DrugBank" id="DB04243">
    <property type="generic name" value="TMP"/>
</dbReference>
<dbReference type="jPOST" id="P0AGE0"/>
<dbReference type="PaxDb" id="511145-b4059"/>
<dbReference type="EnsemblBacteria" id="AAC77029">
    <property type="protein sequence ID" value="AAC77029"/>
    <property type="gene ID" value="b4059"/>
</dbReference>
<dbReference type="GeneID" id="948570"/>
<dbReference type="KEGG" id="ecj:JW4020"/>
<dbReference type="KEGG" id="eco:b4059"/>
<dbReference type="KEGG" id="ecoc:C3026_21935"/>
<dbReference type="PATRIC" id="fig|511145.12.peg.4180"/>
<dbReference type="EchoBASE" id="EB0969"/>
<dbReference type="eggNOG" id="COG0629">
    <property type="taxonomic scope" value="Bacteria"/>
</dbReference>
<dbReference type="HOGENOM" id="CLU_078758_0_2_6"/>
<dbReference type="InParanoid" id="P0AGE0"/>
<dbReference type="OMA" id="FLRCNVW"/>
<dbReference type="OrthoDB" id="9809878at2"/>
<dbReference type="PhylomeDB" id="P0AGE0"/>
<dbReference type="BioCyc" id="EcoCyc:EG10976-MONOMER"/>
<dbReference type="BioCyc" id="MetaCyc:EG10976-MONOMER"/>
<dbReference type="CD-CODE" id="B55775CA">
    <property type="entry name" value="SSB condensate"/>
</dbReference>
<dbReference type="EvolutionaryTrace" id="P0AGE0"/>
<dbReference type="PRO" id="PR:P0AGE0"/>
<dbReference type="Proteomes" id="UP000000625">
    <property type="component" value="Chromosome"/>
</dbReference>
<dbReference type="GO" id="GO:0005829">
    <property type="term" value="C:cytosol"/>
    <property type="evidence" value="ECO:0000314"/>
    <property type="project" value="EcoCyc"/>
</dbReference>
<dbReference type="GO" id="GO:0009295">
    <property type="term" value="C:nucleoid"/>
    <property type="evidence" value="ECO:0000318"/>
    <property type="project" value="GO_Central"/>
</dbReference>
<dbReference type="GO" id="GO:0030894">
    <property type="term" value="C:replisome"/>
    <property type="evidence" value="ECO:0000303"/>
    <property type="project" value="ComplexPortal"/>
</dbReference>
<dbReference type="GO" id="GO:0044777">
    <property type="term" value="C:single-stranded DNA-binding protein complex"/>
    <property type="evidence" value="ECO:0000353"/>
    <property type="project" value="ComplexPortal"/>
</dbReference>
<dbReference type="GO" id="GO:0008047">
    <property type="term" value="F:enzyme activator activity"/>
    <property type="evidence" value="ECO:0000315"/>
    <property type="project" value="UniProtKB"/>
</dbReference>
<dbReference type="GO" id="GO:0042802">
    <property type="term" value="F:identical protein binding"/>
    <property type="evidence" value="ECO:0000314"/>
    <property type="project" value="EcoCyc"/>
</dbReference>
<dbReference type="GO" id="GO:0003697">
    <property type="term" value="F:single-stranded DNA binding"/>
    <property type="evidence" value="ECO:0000314"/>
    <property type="project" value="EcoCyc"/>
</dbReference>
<dbReference type="GO" id="GO:0006260">
    <property type="term" value="P:DNA replication"/>
    <property type="evidence" value="ECO:0000318"/>
    <property type="project" value="GO_Central"/>
</dbReference>
<dbReference type="GO" id="GO:0006261">
    <property type="term" value="P:DNA-templated DNA replication"/>
    <property type="evidence" value="ECO:0000303"/>
    <property type="project" value="ComplexPortal"/>
</dbReference>
<dbReference type="GO" id="GO:0006298">
    <property type="term" value="P:mismatch repair"/>
    <property type="evidence" value="ECO:0000304"/>
    <property type="project" value="EcoCyc"/>
</dbReference>
<dbReference type="GO" id="GO:0000725">
    <property type="term" value="P:recombinational repair"/>
    <property type="evidence" value="ECO:0000304"/>
    <property type="project" value="EcoCyc"/>
</dbReference>
<dbReference type="GO" id="GO:0009432">
    <property type="term" value="P:SOS response"/>
    <property type="evidence" value="ECO:0000304"/>
    <property type="project" value="EcoCyc"/>
</dbReference>
<dbReference type="CDD" id="cd04496">
    <property type="entry name" value="SSB_OBF"/>
    <property type="match status" value="1"/>
</dbReference>
<dbReference type="DisProt" id="DP02137"/>
<dbReference type="FunFam" id="2.40.50.140:FF:000065">
    <property type="entry name" value="Single-stranded DNA-binding protein"/>
    <property type="match status" value="1"/>
</dbReference>
<dbReference type="Gene3D" id="2.40.50.140">
    <property type="entry name" value="Nucleic acid-binding proteins"/>
    <property type="match status" value="1"/>
</dbReference>
<dbReference type="HAMAP" id="MF_00984">
    <property type="entry name" value="SSB"/>
    <property type="match status" value="1"/>
</dbReference>
<dbReference type="InterPro" id="IPR012340">
    <property type="entry name" value="NA-bd_OB-fold"/>
</dbReference>
<dbReference type="InterPro" id="IPR000424">
    <property type="entry name" value="Primosome_PriB/ssb"/>
</dbReference>
<dbReference type="InterPro" id="IPR011344">
    <property type="entry name" value="ssDNA-bd"/>
</dbReference>
<dbReference type="NCBIfam" id="NF006533">
    <property type="entry name" value="PRK09010.1"/>
    <property type="match status" value="1"/>
</dbReference>
<dbReference type="NCBIfam" id="TIGR00621">
    <property type="entry name" value="ssb"/>
    <property type="match status" value="1"/>
</dbReference>
<dbReference type="PANTHER" id="PTHR10302">
    <property type="entry name" value="SINGLE-STRANDED DNA-BINDING PROTEIN"/>
    <property type="match status" value="1"/>
</dbReference>
<dbReference type="PANTHER" id="PTHR10302:SF27">
    <property type="entry name" value="SINGLE-STRANDED DNA-BINDING PROTEIN"/>
    <property type="match status" value="1"/>
</dbReference>
<dbReference type="Pfam" id="PF00436">
    <property type="entry name" value="SSB"/>
    <property type="match status" value="1"/>
</dbReference>
<dbReference type="PIRSF" id="PIRSF002070">
    <property type="entry name" value="SSB"/>
    <property type="match status" value="1"/>
</dbReference>
<dbReference type="SUPFAM" id="SSF50249">
    <property type="entry name" value="Nucleic acid-binding proteins"/>
    <property type="match status" value="1"/>
</dbReference>
<dbReference type="PROSITE" id="PS50935">
    <property type="entry name" value="SSB"/>
    <property type="match status" value="1"/>
</dbReference>
<comment type="function">
    <text evidence="1 9 11 12 16">Plays an important role in DNA replication, recombination and repair. Binds to ssDNA and to an array of partner proteins to recruit them to their sites of action during DNA metabolism. Acts as a sliding platform that migrates on DNA via reptation. SSB or its 10 C-terminal amino acids stimulates the ATPase activity of RadD (PubMed:27519413).</text>
</comment>
<comment type="activity regulation">
    <text evidence="11">The C-terminal tail exerts an inhibitory effect on ssDNA binding.</text>
</comment>
<comment type="subunit">
    <text evidence="1 3 4 5 7 8 10 13 14 15 16 18 21 22 23">Homotetramer. Interacts, via its C-terminus, with many proteins involved in DNA metabolism such as DnaG, HolC, PriA, PriB, PriC, RecO, RecQ and SbcB. Interacts with RadD (PubMed:27519413).</text>
</comment>
<comment type="interaction">
    <interactant intactId="EBI-1118620">
        <id>P0AGE0</id>
    </interactant>
    <interactant intactId="EBI-1114590">
        <id>P27296</id>
        <label>dinG</label>
    </interactant>
    <organismsDiffer>false</organismsDiffer>
    <experiments>2</experiments>
</comment>
<comment type="interaction">
    <interactant intactId="EBI-1118620">
        <id>P0AGE0</id>
    </interactant>
    <interactant intactId="EBI-549259">
        <id>P0ABS5</id>
        <label>dnaG</label>
    </interactant>
    <organismsDiffer>false</organismsDiffer>
    <experiments>2</experiments>
</comment>
<comment type="interaction">
    <interactant intactId="EBI-1118620">
        <id>P0AGE0</id>
    </interactant>
    <interactant intactId="EBI-549140">
        <id>P06710</id>
        <label>dnaX</label>
    </interactant>
    <organismsDiffer>false</organismsDiffer>
    <experiments>2</experiments>
</comment>
<comment type="interaction">
    <interactant intactId="EBI-1118620">
        <id>P0AGE0</id>
    </interactant>
    <interactant intactId="EBI-549169">
        <id>P28905</id>
        <label>holC</label>
    </interactant>
    <organismsDiffer>false</organismsDiffer>
    <experiments>10</experiments>
</comment>
<comment type="interaction">
    <interactant intactId="EBI-1118620">
        <id>P0AGE0</id>
    </interactant>
    <interactant intactId="EBI-552050">
        <id>P17888</id>
        <label>priA</label>
    </interactant>
    <organismsDiffer>false</organismsDiffer>
    <experiments>3</experiments>
</comment>
<comment type="interaction">
    <interactant intactId="EBI-1118620">
        <id>P0AGE0</id>
    </interactant>
    <interactant intactId="EBI-1129540">
        <id>P0A7H3</id>
        <label>recO</label>
    </interactant>
    <organismsDiffer>false</organismsDiffer>
    <experiments>3</experiments>
</comment>
<comment type="interaction">
    <interactant intactId="EBI-1118620">
        <id>P0AGE0</id>
    </interactant>
    <interactant intactId="EBI-1118620">
        <id>P0AGE0</id>
        <label>ssb</label>
    </interactant>
    <organismsDiffer>false</organismsDiffer>
    <experiments>2</experiments>
</comment>
<comment type="PTM">
    <text evidence="6">Phosphorylated on tyrosine residue(s).</text>
</comment>
<feature type="initiator methionine" description="Removed" evidence="19 20">
    <location>
        <position position="1"/>
    </location>
</feature>
<feature type="chain" id="PRO_0000096036" description="Single-stranded DNA-binding protein">
    <location>
        <begin position="2"/>
        <end position="178"/>
    </location>
</feature>
<feature type="domain" description="SSB" evidence="1">
    <location>
        <begin position="6"/>
        <end position="111"/>
    </location>
</feature>
<feature type="DNA-binding region" evidence="1">
    <location>
        <begin position="55"/>
        <end position="61"/>
    </location>
</feature>
<feature type="region of interest" description="Disordered" evidence="2">
    <location>
        <begin position="113"/>
        <end position="178"/>
    </location>
</feature>
<feature type="short sequence motif" description="Important for interaction with partner proteins">
    <location>
        <begin position="173"/>
        <end position="178"/>
    </location>
</feature>
<feature type="compositionally biased region" description="Gly residues" evidence="2">
    <location>
        <begin position="115"/>
        <end position="137"/>
    </location>
</feature>
<feature type="compositionally biased region" description="Low complexity" evidence="2">
    <location>
        <begin position="138"/>
        <end position="165"/>
    </location>
</feature>
<feature type="mutagenesis site" description="Increased frequency of precise excision of transposon Tn10 derivatives (mutant SSB-200)." evidence="17">
    <original>G</original>
    <variation>D</variation>
    <location>
        <position position="5"/>
    </location>
</feature>
<feature type="mutagenesis site" description="Increased frequency of precise excision of transposon Tn10 derivatives (mutant SSB-202)." evidence="17">
    <original>L</original>
    <variation>F</variation>
    <location>
        <position position="11"/>
    </location>
</feature>
<feature type="mutagenesis site" description="Increased frequency of precise excision of transposon Tn10 derivatives (mutant SSB-202)." evidence="17">
    <original>P</original>
    <variation>S</variation>
    <location>
        <position position="25"/>
    </location>
</feature>
<feature type="mutagenesis site" description="Reduces DNA-binding affinity." evidence="17">
    <original>H</original>
    <variation>L</variation>
    <location>
        <position position="56"/>
    </location>
</feature>
<feature type="mutagenesis site" description="In SSB-1; destabilizes the tetramer." evidence="17">
    <original>H</original>
    <variation>Y</variation>
    <location>
        <position position="56"/>
    </location>
</feature>
<feature type="mutagenesis site" description="Reduces DNA-binding affinity." evidence="17">
    <original>F</original>
    <variation>A</variation>
    <location>
        <position position="61"/>
    </location>
</feature>
<feature type="mutagenesis site" description="Increased frequency of precise excision of transposon Tn10 derivatives (mutant SSB-201)." evidence="17">
    <original>V</original>
    <variation>M</variation>
    <location>
        <position position="103"/>
    </location>
</feature>
<feature type="mutagenesis site" description="No longer interacts with RadD." evidence="16">
    <location>
        <begin position="171"/>
        <end position="178"/>
    </location>
</feature>
<feature type="mutagenesis site" description="In SSB-113; strongly reduced exonuclease I (sbcB) stimulation. SSB still self interacts, reduced interaction with PriC." evidence="8 14">
    <original>P</original>
    <variation>S</variation>
    <location>
        <position position="177"/>
    </location>
</feature>
<feature type="mutagenesis site" description="Does not self-interact, does not interact with PriC." evidence="14">
    <location>
        <position position="178"/>
    </location>
</feature>
<feature type="sequence conflict" description="In Ref. 2; no nucleotide entry." evidence="24" ref="2">
    <original>A</original>
    <variation>AQ</variation>
    <location>
        <position position="121"/>
    </location>
</feature>
<feature type="sequence conflict" description="In Ref. 1; AAA24649." evidence="24" ref="1">
    <original>G</original>
    <variation>S</variation>
    <location>
        <position position="134"/>
    </location>
</feature>
<feature type="sequence conflict" description="In Ref. 2; no nucleotide entry." evidence="24" ref="2">
    <original>D</original>
    <variation>DG</variation>
    <location>
        <position position="171"/>
    </location>
</feature>
<feature type="strand" evidence="26">
    <location>
        <begin position="6"/>
        <end position="17"/>
    </location>
</feature>
<feature type="strand" evidence="26">
    <location>
        <begin position="20"/>
        <end position="22"/>
    </location>
</feature>
<feature type="strand" evidence="26">
    <location>
        <begin position="25"/>
        <end position="27"/>
    </location>
</feature>
<feature type="strand" evidence="26">
    <location>
        <begin position="30"/>
        <end position="37"/>
    </location>
</feature>
<feature type="strand" evidence="26">
    <location>
        <begin position="45"/>
        <end position="48"/>
    </location>
</feature>
<feature type="strand" evidence="26">
    <location>
        <begin position="54"/>
        <end position="61"/>
    </location>
</feature>
<feature type="helix" evidence="26">
    <location>
        <begin position="63"/>
        <end position="71"/>
    </location>
</feature>
<feature type="strand" evidence="26">
    <location>
        <begin position="77"/>
        <end position="89"/>
    </location>
</feature>
<feature type="strand" evidence="26">
    <location>
        <begin position="91"/>
        <end position="94"/>
    </location>
</feature>
<feature type="strand" evidence="26">
    <location>
        <begin position="96"/>
        <end position="103"/>
    </location>
</feature>
<feature type="strand" evidence="25">
    <location>
        <begin position="105"/>
        <end position="107"/>
    </location>
</feature>
<feature type="strand" evidence="26">
    <location>
        <begin position="108"/>
        <end position="111"/>
    </location>
</feature>
<feature type="strand" evidence="26">
    <location>
        <begin position="120"/>
        <end position="124"/>
    </location>
</feature>
<feature type="strand" evidence="26">
    <location>
        <begin position="136"/>
        <end position="139"/>
    </location>
</feature>
<name>SSB_ECOLI</name>
<organism>
    <name type="scientific">Escherichia coli (strain K12)</name>
    <dbReference type="NCBI Taxonomy" id="83333"/>
    <lineage>
        <taxon>Bacteria</taxon>
        <taxon>Pseudomonadati</taxon>
        <taxon>Pseudomonadota</taxon>
        <taxon>Gammaproteobacteria</taxon>
        <taxon>Enterobacterales</taxon>
        <taxon>Enterobacteriaceae</taxon>
        <taxon>Escherichia</taxon>
    </lineage>
</organism>
<gene>
    <name type="primary">ssb</name>
    <name type="synonym">exrB</name>
    <name type="synonym">lexC</name>
    <name type="ordered locus">b4059</name>
    <name type="ordered locus">JW4020</name>
</gene>
<keyword id="KW-0002">3D-structure</keyword>
<keyword id="KW-0903">Direct protein sequencing</keyword>
<keyword id="KW-0227">DNA damage</keyword>
<keyword id="KW-0233">DNA recombination</keyword>
<keyword id="KW-0234">DNA repair</keyword>
<keyword id="KW-0235">DNA replication</keyword>
<keyword id="KW-0238">DNA-binding</keyword>
<keyword id="KW-0597">Phosphoprotein</keyword>
<keyword id="KW-1185">Reference proteome</keyword>
<proteinExistence type="evidence at protein level"/>
<accession>P0AGE0</accession>
<accession>P02339</accession>
<accession>Q2M6P5</accession>
<reference key="1">
    <citation type="journal article" date="1981" name="Proc. Natl. Acad. Sci. U.S.A.">
        <title>Sequences of the ssb gene and protein.</title>
        <authorList>
            <person name="Sancar A."/>
            <person name="Williams K.R."/>
            <person name="Chase J.W."/>
            <person name="Rupp W.D."/>
        </authorList>
    </citation>
    <scope>NUCLEOTIDE SEQUENCE [GENOMIC DNA]</scope>
    <scope>PROTEIN SEQUENCE OF 2-53</scope>
</reference>
<reference key="2">
    <citation type="journal article" date="1983" name="Proc. Natl. Acad. Sci. U.S.A.">
        <title>F sex factor encodes a single-stranded DNA binding protein (SSB) with extensive sequence homology to Escherichia coli SSB.</title>
        <authorList>
            <person name="Chase J.W."/>
            <person name="Merrill B.M."/>
            <person name="Williams K.R."/>
        </authorList>
    </citation>
    <scope>NUCLEOTIDE SEQUENCE [GENOMIC DNA]</scope>
</reference>
<reference key="3">
    <citation type="journal article" date="1993" name="Nucleic Acids Res.">
        <title>Analysis of the Escherichia coli genome. IV. DNA sequence of the region from 89.2 to 92.8 minutes.</title>
        <authorList>
            <person name="Blattner F.R."/>
            <person name="Burland V.D."/>
            <person name="Plunkett G. III"/>
            <person name="Sofia H.J."/>
            <person name="Daniels D.L."/>
        </authorList>
    </citation>
    <scope>NUCLEOTIDE SEQUENCE [LARGE SCALE GENOMIC DNA]</scope>
    <source>
        <strain>K12 / MG1655 / ATCC 47076</strain>
    </source>
</reference>
<reference key="4">
    <citation type="journal article" date="1997" name="Science">
        <title>The complete genome sequence of Escherichia coli K-12.</title>
        <authorList>
            <person name="Blattner F.R."/>
            <person name="Plunkett G. III"/>
            <person name="Bloch C.A."/>
            <person name="Perna N.T."/>
            <person name="Burland V."/>
            <person name="Riley M."/>
            <person name="Collado-Vides J."/>
            <person name="Glasner J.D."/>
            <person name="Rode C.K."/>
            <person name="Mayhew G.F."/>
            <person name="Gregor J."/>
            <person name="Davis N.W."/>
            <person name="Kirkpatrick H.A."/>
            <person name="Goeden M.A."/>
            <person name="Rose D.J."/>
            <person name="Mau B."/>
            <person name="Shao Y."/>
        </authorList>
    </citation>
    <scope>NUCLEOTIDE SEQUENCE [LARGE SCALE GENOMIC DNA]</scope>
    <source>
        <strain>K12 / MG1655 / ATCC 47076</strain>
    </source>
</reference>
<reference key="5">
    <citation type="journal article" date="2006" name="Mol. Syst. Biol.">
        <title>Highly accurate genome sequences of Escherichia coli K-12 strains MG1655 and W3110.</title>
        <authorList>
            <person name="Hayashi K."/>
            <person name="Morooka N."/>
            <person name="Yamamoto Y."/>
            <person name="Fujita K."/>
            <person name="Isono K."/>
            <person name="Choi S."/>
            <person name="Ohtsubo E."/>
            <person name="Baba T."/>
            <person name="Wanner B.L."/>
            <person name="Mori H."/>
            <person name="Horiuchi T."/>
        </authorList>
    </citation>
    <scope>NUCLEOTIDE SEQUENCE [LARGE SCALE GENOMIC DNA]</scope>
    <source>
        <strain>K12 / W3110 / ATCC 27325 / DSM 5911</strain>
    </source>
</reference>
<reference key="6">
    <citation type="journal article" date="1982" name="Eur. J. Biochem.">
        <title>Biological activity and a partial amino-acid sequence of Escherichia coli DNA-binding protein I isolated from overproducing cells.</title>
        <authorList>
            <person name="Beyreuther K."/>
            <person name="Berthold-Schmidt V."/>
            <person name="Geider K."/>
        </authorList>
    </citation>
    <scope>PROTEIN SEQUENCE OF 2-41</scope>
</reference>
<reference key="7">
    <citation type="journal article" date="1984" name="J. Biol. Chem.">
        <title>Characterization of the Escherichia coli SSB-113 mutant single-stranded DNA-binding protein. Cloning of the gene, DNA and protein sequence analysis, high pressure liquid chromatography peptide mapping, and DNA-binding studies.</title>
        <authorList>
            <person name="Chase J.W."/>
            <person name="L'Italien J.J."/>
            <person name="Murphy J.B."/>
            <person name="Spicer E.K."/>
            <person name="Williams K.R."/>
        </authorList>
    </citation>
    <scope>CHARACTERIZATION</scope>
    <scope>SEQUENCE REVISION TO 134</scope>
</reference>
<reference key="8">
    <citation type="journal article" date="1984" name="J. Biol. Chem.">
        <title>Characterization of the structural and functional defect in the Escherichia coli single-stranded DNA binding protein encoded by the ssb-1 mutant gene. Expression of the ssb-1 gene under lambda pL regulation.</title>
        <authorList>
            <person name="Williams K.R."/>
            <person name="Murphy J.B."/>
            <person name="Chase J.W."/>
        </authorList>
    </citation>
    <scope>MUTANT SSB-1</scope>
</reference>
<reference key="9">
    <citation type="journal article" date="1987" name="FEBS Lett.">
        <title>Tryptophan 54 and phenylalanine 60 are involved synergistically in the binding of E. coli SSB protein to single-stranded polynucleotides.</title>
        <authorList>
            <person name="Casas-Finet J.R."/>
            <person name="Khamis M.I."/>
            <person name="Maki A.W."/>
            <person name="Chase J.W."/>
        </authorList>
    </citation>
    <scope>MUTAGENESIS OF GLY-5; LEU-11; PRO-25; HIS-56; PHE-61 AND VAL-103</scope>
    <scope>DNA-BINDING</scope>
</reference>
<reference key="10">
    <citation type="journal article" date="1990" name="Microbiol. Rev.">
        <title>The single-stranded DNA-binding protein of Escherichia coli.</title>
        <authorList>
            <person name="Meyer R.R."/>
            <person name="Laine P.S."/>
        </authorList>
    </citation>
    <scope>REVIEW</scope>
</reference>
<reference key="11">
    <citation type="journal article" date="1991" name="J. Mol. Biol.">
        <title>Monomers of the Escherichia coli SSB-1 mutant protein bind single-stranded DNA.</title>
        <authorList>
            <person name="Bujalowski W."/>
            <person name="Lohman T.M."/>
        </authorList>
    </citation>
    <scope>MUTANT SSB-1</scope>
    <scope>DNA-BINDING</scope>
</reference>
<reference key="12">
    <citation type="journal article" date="1994" name="J. Biol. Chem.">
        <title>Protein interactions in genetic recombination in Escherichia coli. Interactions involving RecO and RecR overcome the inhibition of RecA by single-stranded DNA-binding protein.</title>
        <authorList>
            <person name="Umezu K."/>
            <person name="Kolodner R.D."/>
        </authorList>
    </citation>
    <scope>INTERACTION WITH RECO</scope>
</reference>
<reference key="13">
    <citation type="journal article" date="1997" name="Electrophoresis">
        <title>Escherichia coli proteome analysis using the gene-protein database.</title>
        <authorList>
            <person name="VanBogelen R.A."/>
            <person name="Abshire K.Z."/>
            <person name="Moldover B."/>
            <person name="Olson E.R."/>
            <person name="Neidhardt F.C."/>
        </authorList>
    </citation>
    <scope>IDENTIFICATION BY 2D-GEL</scope>
</reference>
<reference key="14">
    <citation type="journal article" date="1997" name="J. Bacteriol.">
        <title>Identification and characterization of ssb and uup mutants with increased frequency of precise excision of transposon Tn10 derivatives: nucleotide sequence of uup in Escherichia coli.</title>
        <authorList>
            <person name="Reddy M."/>
            <person name="Gowrishankar J."/>
        </authorList>
    </citation>
    <scope>MUTANTS SSB-200; SSB-201 AND SSB-202</scope>
    <source>
        <strain>K12 / W3110 / ATCC 27325 / DSM 5911</strain>
    </source>
</reference>
<reference key="15">
    <citation type="journal article" date="1998" name="EMBO J.">
        <title>Devoted to the lagging strand-the subunit of DNA polymerase III holoenzyme contacts SSB to promote processive elongation and sliding clamp assembly.</title>
        <authorList>
            <person name="Kelman Z."/>
            <person name="Yuzhakov A."/>
            <person name="Andjelkovic J."/>
            <person name="O'Donnell M."/>
        </authorList>
    </citation>
    <scope>INTERACTION WITH HOLC</scope>
</reference>
<reference key="16">
    <citation type="journal article" date="2000" name="Biol. Chem.">
        <title>Interaction of E. coli single-stranded DNA binding protein (SSB) with exonuclease I. The carboxy-terminus of SSB is the recognition site for the nuclease.</title>
        <authorList>
            <person name="Genschel J."/>
            <person name="Curth U."/>
            <person name="Urbanke C."/>
        </authorList>
    </citation>
    <scope>INTERACTION WITH EXONUCLEASE I (SBCB)</scope>
</reference>
<reference key="17">
    <citation type="journal article" date="2004" name="Nucleic Acids Res.">
        <title>PriA helicase and SSB interact physically and functionally.</title>
        <authorList>
            <person name="Cadman C.J."/>
            <person name="McGlynn P."/>
        </authorList>
    </citation>
    <scope>DNA-BINDING</scope>
    <scope>INTERACTION WITH PRIA</scope>
</reference>
<reference key="18">
    <citation type="journal article" date="2006" name="Nucleic Acids Res.">
        <title>Bacterial single-stranded DNA-binding proteins are phosphorylated on tyrosine.</title>
        <authorList>
            <person name="Mijakovic I."/>
            <person name="Petranovic D."/>
            <person name="Macek B."/>
            <person name="Cepo T."/>
            <person name="Mann M."/>
            <person name="Davies J."/>
            <person name="Jensen P.R."/>
            <person name="Vujaklija D."/>
        </authorList>
    </citation>
    <scope>PHOSPHORYLATION</scope>
</reference>
<reference key="19">
    <citation type="journal article" date="2007" name="J. Biol. Chem.">
        <title>A central role for SSB in Escherichia coli RecQ DNA helicase function.</title>
        <authorList>
            <person name="Shereda R.D."/>
            <person name="Bernstein D.A."/>
            <person name="Keck J.L."/>
        </authorList>
    </citation>
    <scope>INTERACTION WITH RECQ</scope>
    <source>
        <strain>K12 / MG1655 / ATCC 47076</strain>
    </source>
</reference>
<reference key="20">
    <citation type="journal article" date="2008" name="Crit. Rev. Biochem. Mol. Biol.">
        <title>SSB as an organizer/mobilizer of genome maintenance complexes.</title>
        <authorList>
            <person name="Shereda R.D."/>
            <person name="Kozlov A.G."/>
            <person name="Lohman T.M."/>
            <person name="Cox M.M."/>
            <person name="Keck J.L."/>
        </authorList>
    </citation>
    <scope>REVIEW</scope>
    <scope>FUNCTION</scope>
</reference>
<reference key="21">
    <citation type="journal article" date="2008" name="Proc. Natl. Acad. Sci. U.S.A.">
        <title>Structural basis of Escherichia coli single-stranded DNA-binding protein stimulation of exonuclease I.</title>
        <authorList>
            <person name="Lu D."/>
            <person name="Keck J.L."/>
        </authorList>
    </citation>
    <scope>INTERACTION WITH EXONUCLEASE I (SBCB)</scope>
    <scope>MUTAGENESIS OF PRO-177</scope>
</reference>
<reference key="22">
    <citation type="journal article" date="2010" name="J. Biol. Chem.">
        <title>Regulation of single-stranded DNA binding by the C termini of Escherichia coli single-stranded DNA-binding (SSB) protein.</title>
        <authorList>
            <person name="Kozlov A.G."/>
            <person name="Cox M.M."/>
            <person name="Lohman T.M."/>
        </authorList>
    </citation>
    <scope>FUNCTION</scope>
    <scope>DNA-BINDING</scope>
    <scope>ACTIVITY REGULATION</scope>
</reference>
<reference key="23">
    <citation type="journal article" date="2010" name="Proc. Natl. Acad. Sci. U.S.A.">
        <title>Small-molecule tools for dissecting the roles of SSB/protein interactions in genome maintenance.</title>
        <authorList>
            <person name="Lu D."/>
            <person name="Bernstein D.A."/>
            <person name="Satyshur K.A."/>
            <person name="Keck J.L."/>
        </authorList>
    </citation>
    <scope>INTERACTION WITH EXONUCLEASE I (SBCB)</scope>
</reference>
<reference key="24">
    <citation type="journal article" date="2011" name="Cell">
        <title>SSB functions as a sliding platform that migrates on DNA via reptation.</title>
        <authorList>
            <person name="Zhou R."/>
            <person name="Kozlov A.G."/>
            <person name="Roy R."/>
            <person name="Zhang J."/>
            <person name="Korolev S."/>
            <person name="Lohman T.M."/>
            <person name="Ha T."/>
        </authorList>
    </citation>
    <scope>FUNCTION</scope>
</reference>
<reference key="25">
    <citation type="journal article" date="2013" name="Nucleic Acids Res.">
        <title>The helicase-binding domain of Escherichia coli DnaG primase interacts with the highly conserved C-terminal region of single-stranded DNA-binding protein.</title>
        <authorList>
            <person name="Naue N."/>
            <person name="Beerbaum M."/>
            <person name="Bogutzki A."/>
            <person name="Schmieder P."/>
            <person name="Curth U."/>
        </authorList>
    </citation>
    <scope>INTERACTION WITH DNAG</scope>
</reference>
<reference key="26">
    <citation type="journal article" date="2013" name="J. Biol. Chem.">
        <title>PriC-mediated DNA replication restart requires PriC complex formation with the single-stranded DNA-binding protein.</title>
        <authorList>
            <person name="Wessel S.R."/>
            <person name="Marceau A.H."/>
            <person name="Massoni S.C."/>
            <person name="Zhou R."/>
            <person name="Ha T."/>
            <person name="Sandler S.J."/>
            <person name="Keck J.L."/>
        </authorList>
    </citation>
    <scope>INTERACTION WITH PRIC</scope>
    <scope>MUTAGENESIS OF PRO-177 AND PHE-178</scope>
</reference>
<reference key="27">
    <citation type="journal article" date="2013" name="Protein J.">
        <title>Yeast two-hybrid analysis of PriB-interacting proteins in replication restart primosome: a proposed PriB-SSB interaction model.</title>
        <authorList>
            <person name="Huang Y.H."/>
            <person name="Lin M.J."/>
            <person name="Huang C.Y."/>
        </authorList>
    </citation>
    <scope>INTERACTION WITH PRIB</scope>
</reference>
<reference key="28">
    <citation type="journal article" date="2016" name="J. Biol. Chem.">
        <title>Escherichia coli RadD Protein Functionally Interacts with the Single-stranded DNA-binding Protein.</title>
        <authorList>
            <person name="Chen S.H."/>
            <person name="Byrne-Nash R.T."/>
            <person name="Cox M.M."/>
        </authorList>
    </citation>
    <scope>FUNCTION</scope>
    <scope>INTERACTION WITH RADD</scope>
    <scope>MUTAGENESIS OF 171-ASP--PHE-178</scope>
    <source>
        <strain>K12 / MG1655 (DE3)</strain>
    </source>
</reference>
<reference key="29">
    <citation type="journal article" date="2021" name="DNA Repair">
        <title>Alternative complexes formed by the Escherichia coli clamp loader accessory protein HolC (x) with replication protein HolD (psi) and repair protein YoaA.</title>
        <authorList>
            <person name="Sutera V.A."/>
            <person name="Weeks S.J."/>
            <person name="Dudenhausen E.E."/>
            <person name="Baggett H.B.R."/>
            <person name="Shaw M.C."/>
            <person name="Brand K.A."/>
            <person name="Glass D.J."/>
            <person name="Bloom L.B."/>
            <person name="Lovett S.T."/>
        </authorList>
    </citation>
    <scope>INTERACTION WITH HOLC</scope>
</reference>
<reference key="30">
    <citation type="journal article" date="1997" name="Proc. Natl. Acad. Sci. U.S.A.">
        <title>Crystal structure of the homo-tetrameric DNA binding domain of Escherichia coli single-stranded DNA-binding protein determined by multiwavelength X-ray diffraction on the selenomethionyl protein at 2.9-A resolution.</title>
        <authorList>
            <person name="Raghunathan S."/>
            <person name="Ricard C.S."/>
            <person name="Lohman T.M."/>
            <person name="Waksman G."/>
        </authorList>
    </citation>
    <scope>X-RAY CRYSTALLOGRAPHY (2.9 ANGSTROMS) OF 1-136</scope>
    <scope>SUBUNIT</scope>
</reference>
<reference key="31">
    <citation type="journal article" date="2000" name="Nat. Struct. Biol.">
        <title>Structure of the DNA binding domain of E. coli SSB bound to ssDNA.</title>
        <authorList>
            <person name="Raghunathan S."/>
            <person name="Kozlov A.G."/>
            <person name="Lohman T.M."/>
            <person name="Waksman G."/>
        </authorList>
    </citation>
    <scope>X-RAY CRYSTALLOGRAPHY (2.8 ANGSTROMS) OF 1-136</scope>
    <scope>DNA-BINDING</scope>
    <scope>SUBUNIT</scope>
</reference>